<accession>O07458</accession>
<organism>
    <name type="scientific">Rhodopseudomonas palustris (strain ATCC BAA-98 / CGA009)</name>
    <dbReference type="NCBI Taxonomy" id="258594"/>
    <lineage>
        <taxon>Bacteria</taxon>
        <taxon>Pseudomonadati</taxon>
        <taxon>Pseudomonadota</taxon>
        <taxon>Alphaproteobacteria</taxon>
        <taxon>Hyphomicrobiales</taxon>
        <taxon>Nitrobacteraceae</taxon>
        <taxon>Rhodopseudomonas</taxon>
    </lineage>
</organism>
<feature type="chain" id="PRO_0000054352" description="Transcriptional activatory protein BadR">
    <location>
        <begin position="1"/>
        <end position="175"/>
    </location>
</feature>
<feature type="domain" description="HTH marR-type" evidence="1">
    <location>
        <begin position="20"/>
        <end position="156"/>
    </location>
</feature>
<dbReference type="EMBL" id="U75363">
    <property type="protein sequence ID" value="AAC23923.1"/>
    <property type="molecule type" value="Genomic_DNA"/>
</dbReference>
<dbReference type="EMBL" id="BX572595">
    <property type="protein sequence ID" value="CAE26099.1"/>
    <property type="molecule type" value="Genomic_DNA"/>
</dbReference>
<dbReference type="PIR" id="T51765">
    <property type="entry name" value="T51765"/>
</dbReference>
<dbReference type="RefSeq" id="WP_011156222.1">
    <property type="nucleotide sequence ID" value="NZ_CP116810.1"/>
</dbReference>
<dbReference type="SMR" id="O07458"/>
<dbReference type="STRING" id="258594.RPA0655"/>
<dbReference type="DNASU" id="2692633"/>
<dbReference type="GeneID" id="66891678"/>
<dbReference type="eggNOG" id="COG1846">
    <property type="taxonomic scope" value="Bacteria"/>
</dbReference>
<dbReference type="HOGENOM" id="CLU_083287_18_7_5"/>
<dbReference type="PhylomeDB" id="O07458"/>
<dbReference type="GO" id="GO:0003677">
    <property type="term" value="F:DNA binding"/>
    <property type="evidence" value="ECO:0007669"/>
    <property type="project" value="UniProtKB-KW"/>
</dbReference>
<dbReference type="GO" id="GO:0003700">
    <property type="term" value="F:DNA-binding transcription factor activity"/>
    <property type="evidence" value="ECO:0007669"/>
    <property type="project" value="InterPro"/>
</dbReference>
<dbReference type="GO" id="GO:0006950">
    <property type="term" value="P:response to stress"/>
    <property type="evidence" value="ECO:0007669"/>
    <property type="project" value="TreeGrafter"/>
</dbReference>
<dbReference type="Gene3D" id="1.10.10.10">
    <property type="entry name" value="Winged helix-like DNA-binding domain superfamily/Winged helix DNA-binding domain"/>
    <property type="match status" value="1"/>
</dbReference>
<dbReference type="InterPro" id="IPR000835">
    <property type="entry name" value="HTH_MarR-typ"/>
</dbReference>
<dbReference type="InterPro" id="IPR039422">
    <property type="entry name" value="MarR/SlyA-like"/>
</dbReference>
<dbReference type="InterPro" id="IPR023187">
    <property type="entry name" value="Tscrpt_reg_MarR-type_CS"/>
</dbReference>
<dbReference type="InterPro" id="IPR036388">
    <property type="entry name" value="WH-like_DNA-bd_sf"/>
</dbReference>
<dbReference type="InterPro" id="IPR036390">
    <property type="entry name" value="WH_DNA-bd_sf"/>
</dbReference>
<dbReference type="PANTHER" id="PTHR33164:SF13">
    <property type="entry name" value="4-HYDROXYPHENYLACETATE CATABOLISM PROTEIN"/>
    <property type="match status" value="1"/>
</dbReference>
<dbReference type="PANTHER" id="PTHR33164">
    <property type="entry name" value="TRANSCRIPTIONAL REGULATOR, MARR FAMILY"/>
    <property type="match status" value="1"/>
</dbReference>
<dbReference type="Pfam" id="PF12802">
    <property type="entry name" value="MarR_2"/>
    <property type="match status" value="1"/>
</dbReference>
<dbReference type="SMART" id="SM00347">
    <property type="entry name" value="HTH_MARR"/>
    <property type="match status" value="1"/>
</dbReference>
<dbReference type="SUPFAM" id="SSF46785">
    <property type="entry name" value="Winged helix' DNA-binding domain"/>
    <property type="match status" value="1"/>
</dbReference>
<dbReference type="PROSITE" id="PS01117">
    <property type="entry name" value="HTH_MARR_1"/>
    <property type="match status" value="1"/>
</dbReference>
<dbReference type="PROSITE" id="PS50995">
    <property type="entry name" value="HTH_MARR_2"/>
    <property type="match status" value="1"/>
</dbReference>
<evidence type="ECO:0000255" key="1">
    <source>
        <dbReference type="PROSITE-ProRule" id="PRU00345"/>
    </source>
</evidence>
<gene>
    <name type="primary">badR</name>
    <name type="ordered locus">RPA0655</name>
</gene>
<protein>
    <recommendedName>
        <fullName>Transcriptional activatory protein BadR</fullName>
    </recommendedName>
    <alternativeName>
        <fullName>Benzoate anaerobic degradation regulator</fullName>
    </alternativeName>
</protein>
<reference key="1">
    <citation type="journal article" date="1997" name="Proc. Natl. Acad. Sci. U.S.A.">
        <title>A cluster of bacterial genes for anaerobic benzene ring biodegradation.</title>
        <authorList>
            <person name="Egland P.G."/>
            <person name="Pelletier D.A."/>
            <person name="Dispensa M."/>
            <person name="Gibson J."/>
            <person name="Harwood C.S."/>
        </authorList>
    </citation>
    <scope>NUCLEOTIDE SEQUENCE [GENOMIC DNA]</scope>
    <source>
        <strain>ATCC BAA-98 / CGA009</strain>
    </source>
</reference>
<reference key="2">
    <citation type="journal article" date="2004" name="Nat. Biotechnol.">
        <title>Complete genome sequence of the metabolically versatile photosynthetic bacterium Rhodopseudomonas palustris.</title>
        <authorList>
            <person name="Larimer F.W."/>
            <person name="Chain P."/>
            <person name="Hauser L."/>
            <person name="Lamerdin J.E."/>
            <person name="Malfatti S."/>
            <person name="Do L."/>
            <person name="Land M.L."/>
            <person name="Pelletier D.A."/>
            <person name="Beatty J.T."/>
            <person name="Lang A.S."/>
            <person name="Tabita F.R."/>
            <person name="Gibson J.L."/>
            <person name="Hanson T.E."/>
            <person name="Bobst C."/>
            <person name="Torres y Torres J.L."/>
            <person name="Peres C."/>
            <person name="Harrison F.H."/>
            <person name="Gibson J."/>
            <person name="Harwood C.S."/>
        </authorList>
    </citation>
    <scope>NUCLEOTIDE SEQUENCE [LARGE SCALE GENOMIC DNA]</scope>
    <source>
        <strain>ATCC BAA-98 / CGA009</strain>
    </source>
</reference>
<reference key="3">
    <citation type="journal article" date="1999" name="J. Bacteriol.">
        <title>BadR, a new MarR family member, regulates anaerobic benzoate degradation by Rhodopseudomonas palustris in concert with AadR, an Fnr family member.</title>
        <authorList>
            <person name="Egland P.G."/>
            <person name="Harwood C.S."/>
        </authorList>
    </citation>
    <scope>CHARACTERIZATION</scope>
</reference>
<comment type="function">
    <text>Transcriptional activator of genes for the anaerobic degradation of benzoate.</text>
</comment>
<proteinExistence type="evidence at protein level"/>
<keyword id="KW-0010">Activator</keyword>
<keyword id="KW-0238">DNA-binding</keyword>
<keyword id="KW-0804">Transcription</keyword>
<keyword id="KW-0805">Transcription regulation</keyword>
<name>BADR_RHOPA</name>
<sequence>MMAKKRVATDNAADAKMELANRLFFRLYQCANMLHKTGTRAVEAEGLTTQQWAVLGALSRPTVANGMSVGDLARYLMVSRQNLTGLIGRMERDGHVAVVPDERDRRSRLVTMTKSGRHVWEVLAQPKIRAYYGEVLGDFSINDVTHTLHYLLKILDNMKRLDDGAAGETAATDLE</sequence>